<dbReference type="EC" id="3.1.1.-" evidence="2"/>
<dbReference type="EMBL" id="AL123456">
    <property type="protein sequence ID" value="CCP45083.1"/>
    <property type="molecule type" value="Genomic_DNA"/>
</dbReference>
<dbReference type="RefSeq" id="NP_216817.2">
    <property type="nucleotide sequence ID" value="NC_000962.3"/>
</dbReference>
<dbReference type="RefSeq" id="WP_003411863.1">
    <property type="nucleotide sequence ID" value="NZ_NVQJ01000012.1"/>
</dbReference>
<dbReference type="SMR" id="P9WP41"/>
<dbReference type="STRING" id="83332.Rv2301"/>
<dbReference type="ESTHER" id="myctu-cutas2">
    <property type="family name" value="Cutinase"/>
</dbReference>
<dbReference type="PaxDb" id="83332-Rv2301"/>
<dbReference type="DNASU" id="885371"/>
<dbReference type="GeneID" id="885371"/>
<dbReference type="KEGG" id="mtu:Rv2301"/>
<dbReference type="KEGG" id="mtv:RVBD_2301"/>
<dbReference type="TubercuList" id="Rv2301"/>
<dbReference type="eggNOG" id="ENOG5033WEM">
    <property type="taxonomic scope" value="Bacteria"/>
</dbReference>
<dbReference type="InParanoid" id="P9WP41"/>
<dbReference type="OrthoDB" id="3690529at2"/>
<dbReference type="PhylomeDB" id="P9WP41"/>
<dbReference type="Proteomes" id="UP000001584">
    <property type="component" value="Chromosome"/>
</dbReference>
<dbReference type="GO" id="GO:0009986">
    <property type="term" value="C:cell surface"/>
    <property type="evidence" value="ECO:0007669"/>
    <property type="project" value="UniProtKB-SubCell"/>
</dbReference>
<dbReference type="GO" id="GO:0005576">
    <property type="term" value="C:extracellular region"/>
    <property type="evidence" value="ECO:0007005"/>
    <property type="project" value="MTBBASE"/>
</dbReference>
<dbReference type="GO" id="GO:0106435">
    <property type="term" value="F:carboxylesterase activity"/>
    <property type="evidence" value="ECO:0000318"/>
    <property type="project" value="GO_Central"/>
</dbReference>
<dbReference type="GO" id="GO:0016298">
    <property type="term" value="F:lipase activity"/>
    <property type="evidence" value="ECO:0000318"/>
    <property type="project" value="GO_Central"/>
</dbReference>
<dbReference type="GO" id="GO:0016042">
    <property type="term" value="P:lipid catabolic process"/>
    <property type="evidence" value="ECO:0000318"/>
    <property type="project" value="GO_Central"/>
</dbReference>
<dbReference type="GO" id="GO:0042783">
    <property type="term" value="P:symbiont-mediated evasion of host immune response"/>
    <property type="evidence" value="ECO:0000315"/>
    <property type="project" value="MTBBASE"/>
</dbReference>
<dbReference type="FunFam" id="3.40.50.1820:FF:000176">
    <property type="entry name" value="Cutinase Cut4"/>
    <property type="match status" value="1"/>
</dbReference>
<dbReference type="Gene3D" id="3.40.50.1820">
    <property type="entry name" value="alpha/beta hydrolase"/>
    <property type="match status" value="1"/>
</dbReference>
<dbReference type="InterPro" id="IPR029058">
    <property type="entry name" value="AB_hydrolase_fold"/>
</dbReference>
<dbReference type="InterPro" id="IPR000675">
    <property type="entry name" value="Cutinase/axe"/>
</dbReference>
<dbReference type="InterPro" id="IPR043580">
    <property type="entry name" value="CUTINASE_1"/>
</dbReference>
<dbReference type="InterPro" id="IPR006311">
    <property type="entry name" value="TAT_signal"/>
</dbReference>
<dbReference type="PANTHER" id="PTHR33630:SF9">
    <property type="entry name" value="CUTINASE 4"/>
    <property type="match status" value="1"/>
</dbReference>
<dbReference type="PANTHER" id="PTHR33630">
    <property type="entry name" value="CUTINASE RV1984C-RELATED-RELATED"/>
    <property type="match status" value="1"/>
</dbReference>
<dbReference type="Pfam" id="PF01083">
    <property type="entry name" value="Cutinase"/>
    <property type="match status" value="1"/>
</dbReference>
<dbReference type="SMART" id="SM01110">
    <property type="entry name" value="Cutinase"/>
    <property type="match status" value="1"/>
</dbReference>
<dbReference type="SUPFAM" id="SSF53474">
    <property type="entry name" value="alpha/beta-Hydrolases"/>
    <property type="match status" value="1"/>
</dbReference>
<dbReference type="PROSITE" id="PS00155">
    <property type="entry name" value="CUTINASE_1"/>
    <property type="match status" value="1"/>
</dbReference>
<dbReference type="PROSITE" id="PS51318">
    <property type="entry name" value="TAT"/>
    <property type="match status" value="1"/>
</dbReference>
<gene>
    <name type="primary">cut2</name>
    <name type="ordered locus">Rv2301</name>
    <name type="ORF">MTCY339.08c</name>
</gene>
<protein>
    <recommendedName>
        <fullName evidence="9">Probable carboxylesterase Culp2</fullName>
        <ecNumber evidence="2">3.1.1.-</ecNumber>
    </recommendedName>
    <alternativeName>
        <fullName evidence="8">CFP25</fullName>
    </alternativeName>
    <alternativeName>
        <fullName evidence="7">Cutinase-like protein 2</fullName>
        <shortName evidence="7">Culp2</shortName>
    </alternativeName>
</protein>
<comment type="function">
    <text evidence="4">Shows weak esterase activity with the p-nitrophenol-linked aliphatic ester pNP-butyrate. Does not exhibit cutinase activity.</text>
</comment>
<comment type="function">
    <text evidence="3 6">Induces interferon-gamma (IFN-gamma) release in animal models and in human TB patients (PubMed:10076913, PubMed:9673225). Also induces a strong delayed-type hypersensitivity (DTH) response in animal models (PubMed:9673225).</text>
</comment>
<comment type="subcellular location">
    <subcellularLocation>
        <location evidence="4 6">Secreted</location>
    </subcellularLocation>
    <subcellularLocation>
        <location evidence="5">Cell surface</location>
    </subcellularLocation>
</comment>
<comment type="biotechnology">
    <text evidence="5">Five Rv2301 high activity binding peptides (HABPs) could be included as components of an antituberculosis vaccine.</text>
</comment>
<comment type="similarity">
    <text evidence="9">Belongs to the cutinase family.</text>
</comment>
<name>CULP2_MYCTU</name>
<proteinExistence type="evidence at protein level"/>
<sequence length="230" mass="23926">MNDLLTRRLLTMGAAAAMLAAVLLLTPITVPAGYPGAVAPATAACPDAEVVFARGRFEPPGIGTVGNAFVSALRSKVNKNVGVYAVKYPADNQIDVGANDMSAHIQSMANSCPNTRLVPGGYSLGAAVTDVVLAVPTQMWGFTNPLPPGSDEHIAAVALFGNGSQWVGPITNFSPAYNDRTIELCHGDDPVCHPADPNTWEANWPQHLAGAYVSSGMVNQAADFVAGKLQ</sequence>
<evidence type="ECO:0000250" key="1">
    <source>
        <dbReference type="UniProtKB" id="O53581"/>
    </source>
</evidence>
<evidence type="ECO:0000250" key="2">
    <source>
        <dbReference type="UniProtKB" id="P9WP43"/>
    </source>
</evidence>
<evidence type="ECO:0000269" key="3">
    <source>
    </source>
</evidence>
<evidence type="ECO:0000269" key="4">
    <source>
    </source>
</evidence>
<evidence type="ECO:0000269" key="5">
    <source>
    </source>
</evidence>
<evidence type="ECO:0000269" key="6">
    <source>
    </source>
</evidence>
<evidence type="ECO:0000303" key="7">
    <source>
    </source>
</evidence>
<evidence type="ECO:0000303" key="8">
    <source>
    </source>
</evidence>
<evidence type="ECO:0000305" key="9"/>
<organism>
    <name type="scientific">Mycobacterium tuberculosis (strain ATCC 25618 / H37Rv)</name>
    <dbReference type="NCBI Taxonomy" id="83332"/>
    <lineage>
        <taxon>Bacteria</taxon>
        <taxon>Bacillati</taxon>
        <taxon>Actinomycetota</taxon>
        <taxon>Actinomycetes</taxon>
        <taxon>Mycobacteriales</taxon>
        <taxon>Mycobacteriaceae</taxon>
        <taxon>Mycobacterium</taxon>
        <taxon>Mycobacterium tuberculosis complex</taxon>
    </lineage>
</organism>
<accession>P9WP41</accession>
<accession>L0TAS9</accession>
<accession>P63881</accession>
<accession>Q50664</accession>
<keyword id="KW-0903">Direct protein sequencing</keyword>
<keyword id="KW-1015">Disulfide bond</keyword>
<keyword id="KW-0378">Hydrolase</keyword>
<keyword id="KW-1185">Reference proteome</keyword>
<keyword id="KW-0964">Secreted</keyword>
<keyword id="KW-0719">Serine esterase</keyword>
<keyword id="KW-0732">Signal</keyword>
<keyword id="KW-0843">Virulence</keyword>
<reference key="1">
    <citation type="journal article" date="1998" name="Nature">
        <title>Deciphering the biology of Mycobacterium tuberculosis from the complete genome sequence.</title>
        <authorList>
            <person name="Cole S.T."/>
            <person name="Brosch R."/>
            <person name="Parkhill J."/>
            <person name="Garnier T."/>
            <person name="Churcher C.M."/>
            <person name="Harris D.E."/>
            <person name="Gordon S.V."/>
            <person name="Eiglmeier K."/>
            <person name="Gas S."/>
            <person name="Barry C.E. III"/>
            <person name="Tekaia F."/>
            <person name="Badcock K."/>
            <person name="Basham D."/>
            <person name="Brown D."/>
            <person name="Chillingworth T."/>
            <person name="Connor R."/>
            <person name="Davies R.M."/>
            <person name="Devlin K."/>
            <person name="Feltwell T."/>
            <person name="Gentles S."/>
            <person name="Hamlin N."/>
            <person name="Holroyd S."/>
            <person name="Hornsby T."/>
            <person name="Jagels K."/>
            <person name="Krogh A."/>
            <person name="McLean J."/>
            <person name="Moule S."/>
            <person name="Murphy L.D."/>
            <person name="Oliver S."/>
            <person name="Osborne J."/>
            <person name="Quail M.A."/>
            <person name="Rajandream M.A."/>
            <person name="Rogers J."/>
            <person name="Rutter S."/>
            <person name="Seeger K."/>
            <person name="Skelton S."/>
            <person name="Squares S."/>
            <person name="Squares R."/>
            <person name="Sulston J.E."/>
            <person name="Taylor K."/>
            <person name="Whitehead S."/>
            <person name="Barrell B.G."/>
        </authorList>
    </citation>
    <scope>NUCLEOTIDE SEQUENCE [LARGE SCALE GENOMIC DNA]</scope>
    <source>
        <strain>ATCC 25618 / H37Rv</strain>
    </source>
</reference>
<reference key="2">
    <citation type="journal article" date="1998" name="Infect. Immun.">
        <title>Two-dimensional electrophoresis for analysis of Mycobacterium tuberculosis culture filtrate and purification and characterization of six novel proteins.</title>
        <authorList>
            <person name="Weldingh K."/>
            <person name="Rosenkrands I."/>
            <person name="Jacobsen S."/>
            <person name="Rasmussen P.B."/>
            <person name="Elhay M.J."/>
            <person name="Andersen P."/>
        </authorList>
    </citation>
    <scope>PROTEIN SEQUENCE OF 44-58</scope>
    <scope>FUNCTION</scope>
    <scope>SUBCELLULAR LOCATION</scope>
    <source>
        <strain>H37Rv</strain>
    </source>
</reference>
<reference key="3">
    <citation type="journal article" date="1999" name="FEMS Immunol. Med. Microbiol.">
        <title>Immunological evaluation of novel Mycobacterium tuberculosis culture filtrate proteins.</title>
        <authorList>
            <person name="Weldingh K."/>
            <person name="Andersen P."/>
        </authorList>
    </citation>
    <scope>FUNCTION</scope>
</reference>
<reference key="4">
    <citation type="journal article" date="2009" name="FASEB J.">
        <title>Cutinase-like proteins of Mycobacterium tuberculosis: characterization of their variable enzymatic functions and active site identification.</title>
        <authorList>
            <person name="West N.P."/>
            <person name="Chow F.M."/>
            <person name="Randall E.J."/>
            <person name="Wu J."/>
            <person name="Chen J."/>
            <person name="Ribeiro J.M."/>
            <person name="Britton W.J."/>
        </authorList>
    </citation>
    <scope>FUNCTION</scope>
    <scope>SUBCELLULAR LOCATION</scope>
    <source>
        <strain>H37Rv</strain>
    </source>
</reference>
<reference key="5">
    <citation type="journal article" date="2011" name="Mol. Cell. Proteomics">
        <title>Proteogenomic analysis of Mycobacterium tuberculosis by high resolution mass spectrometry.</title>
        <authorList>
            <person name="Kelkar D.S."/>
            <person name="Kumar D."/>
            <person name="Kumar P."/>
            <person name="Balakrishnan L."/>
            <person name="Muthusamy B."/>
            <person name="Yadav A.K."/>
            <person name="Shrivastava P."/>
            <person name="Marimuthu A."/>
            <person name="Anand S."/>
            <person name="Sundaram H."/>
            <person name="Kingsbury R."/>
            <person name="Harsha H.C."/>
            <person name="Nair B."/>
            <person name="Prasad T.S."/>
            <person name="Chauhan D.S."/>
            <person name="Katoch K."/>
            <person name="Katoch V.M."/>
            <person name="Kumar P."/>
            <person name="Chaerkady R."/>
            <person name="Ramachandran S."/>
            <person name="Dash D."/>
            <person name="Pandey A."/>
        </authorList>
    </citation>
    <scope>IDENTIFICATION BY MASS SPECTROMETRY [LARGE SCALE ANALYSIS]</scope>
    <source>
        <strain>ATCC 25618 / H37Rv</strain>
    </source>
</reference>
<reference key="6">
    <citation type="journal article" date="2012" name="Amino Acids">
        <title>Peptides derived from Mycobacterium tuberculosis Rv2301 protein are involved in invasion to human epithelial cells and macrophages.</title>
        <authorList>
            <person name="Ocampo M."/>
            <person name="Rodriguez D.M."/>
            <person name="Curtidor H."/>
            <person name="Vanegas M."/>
            <person name="Patarroyo M.A."/>
            <person name="Patarroyo M.E."/>
        </authorList>
    </citation>
    <scope>SUBCELLULAR LOCATION</scope>
    <scope>BIOTECHNOLOGY</scope>
</reference>
<feature type="signal peptide" evidence="6">
    <location>
        <begin position="1"/>
        <end position="43"/>
    </location>
</feature>
<feature type="chain" id="PRO_0000006449" description="Probable carboxylesterase Culp2">
    <location>
        <begin position="44"/>
        <end position="230"/>
    </location>
</feature>
<feature type="active site" description="Nucleophile" evidence="1">
    <location>
        <position position="123"/>
    </location>
</feature>
<feature type="active site" evidence="1">
    <location>
        <position position="189"/>
    </location>
</feature>
<feature type="active site" description="Proton donor/acceptor" evidence="1">
    <location>
        <position position="207"/>
    </location>
</feature>
<feature type="disulfide bond" evidence="1">
    <location>
        <begin position="45"/>
        <end position="112"/>
    </location>
</feature>
<feature type="disulfide bond" evidence="1">
    <location>
        <begin position="185"/>
        <end position="192"/>
    </location>
</feature>